<keyword id="KW-0028">Amino-acid biosynthesis</keyword>
<keyword id="KW-0963">Cytoplasm</keyword>
<keyword id="KW-0554">One-carbon metabolism</keyword>
<keyword id="KW-0663">Pyridoxal phosphate</keyword>
<keyword id="KW-1185">Reference proteome</keyword>
<keyword id="KW-0808">Transferase</keyword>
<name>GLYA_NITMS</name>
<organism>
    <name type="scientific">Nitrosopumilus maritimus (strain SCM1)</name>
    <dbReference type="NCBI Taxonomy" id="436308"/>
    <lineage>
        <taxon>Archaea</taxon>
        <taxon>Nitrososphaerota</taxon>
        <taxon>Nitrososphaeria</taxon>
        <taxon>Nitrosopumilales</taxon>
        <taxon>Nitrosopumilaceae</taxon>
        <taxon>Nitrosopumilus</taxon>
    </lineage>
</organism>
<dbReference type="EC" id="2.1.2.-" evidence="1"/>
<dbReference type="EMBL" id="CP000866">
    <property type="protein sequence ID" value="ABX13689.1"/>
    <property type="molecule type" value="Genomic_DNA"/>
</dbReference>
<dbReference type="RefSeq" id="WP_012216175.1">
    <property type="nucleotide sequence ID" value="NC_010085.1"/>
</dbReference>
<dbReference type="SMR" id="A9A3Y9"/>
<dbReference type="FunCoup" id="A9A3Y9">
    <property type="interactions" value="269"/>
</dbReference>
<dbReference type="STRING" id="436308.Nmar_1793"/>
<dbReference type="EnsemblBacteria" id="ABX13689">
    <property type="protein sequence ID" value="ABX13689"/>
    <property type="gene ID" value="Nmar_1793"/>
</dbReference>
<dbReference type="GeneID" id="5773036"/>
<dbReference type="KEGG" id="nmr:Nmar_1793"/>
<dbReference type="eggNOG" id="arCOG00070">
    <property type="taxonomic scope" value="Archaea"/>
</dbReference>
<dbReference type="HOGENOM" id="CLU_022477_2_1_2"/>
<dbReference type="InParanoid" id="A9A3Y9"/>
<dbReference type="OrthoDB" id="5821at2157"/>
<dbReference type="PhylomeDB" id="A9A3Y9"/>
<dbReference type="UniPathway" id="UPA00288">
    <property type="reaction ID" value="UER01023"/>
</dbReference>
<dbReference type="Proteomes" id="UP000000792">
    <property type="component" value="Chromosome"/>
</dbReference>
<dbReference type="GO" id="GO:0005737">
    <property type="term" value="C:cytoplasm"/>
    <property type="evidence" value="ECO:0000318"/>
    <property type="project" value="GO_Central"/>
</dbReference>
<dbReference type="GO" id="GO:0004372">
    <property type="term" value="F:glycine hydroxymethyltransferase activity"/>
    <property type="evidence" value="ECO:0000318"/>
    <property type="project" value="GO_Central"/>
</dbReference>
<dbReference type="GO" id="GO:0030170">
    <property type="term" value="F:pyridoxal phosphate binding"/>
    <property type="evidence" value="ECO:0000318"/>
    <property type="project" value="GO_Central"/>
</dbReference>
<dbReference type="GO" id="GO:0019264">
    <property type="term" value="P:glycine biosynthetic process from serine"/>
    <property type="evidence" value="ECO:0000318"/>
    <property type="project" value="GO_Central"/>
</dbReference>
<dbReference type="GO" id="GO:0035999">
    <property type="term" value="P:tetrahydrofolate interconversion"/>
    <property type="evidence" value="ECO:0007669"/>
    <property type="project" value="InterPro"/>
</dbReference>
<dbReference type="GO" id="GO:0046653">
    <property type="term" value="P:tetrahydrofolate metabolic process"/>
    <property type="evidence" value="ECO:0000318"/>
    <property type="project" value="GO_Central"/>
</dbReference>
<dbReference type="CDD" id="cd00378">
    <property type="entry name" value="SHMT"/>
    <property type="match status" value="1"/>
</dbReference>
<dbReference type="FunFam" id="3.40.640.10:FF:000101">
    <property type="entry name" value="Serine hydroxymethyltransferase"/>
    <property type="match status" value="1"/>
</dbReference>
<dbReference type="FunFam" id="3.90.1150.10:FF:000114">
    <property type="entry name" value="Serine hydroxymethyltransferase"/>
    <property type="match status" value="1"/>
</dbReference>
<dbReference type="Gene3D" id="3.90.1150.10">
    <property type="entry name" value="Aspartate Aminotransferase, domain 1"/>
    <property type="match status" value="1"/>
</dbReference>
<dbReference type="Gene3D" id="3.40.640.10">
    <property type="entry name" value="Type I PLP-dependent aspartate aminotransferase-like (Major domain)"/>
    <property type="match status" value="1"/>
</dbReference>
<dbReference type="HAMAP" id="MF_00051">
    <property type="entry name" value="SHMT"/>
    <property type="match status" value="1"/>
</dbReference>
<dbReference type="InterPro" id="IPR015424">
    <property type="entry name" value="PyrdxlP-dep_Trfase"/>
</dbReference>
<dbReference type="InterPro" id="IPR015421">
    <property type="entry name" value="PyrdxlP-dep_Trfase_major"/>
</dbReference>
<dbReference type="InterPro" id="IPR015422">
    <property type="entry name" value="PyrdxlP-dep_Trfase_small"/>
</dbReference>
<dbReference type="InterPro" id="IPR001085">
    <property type="entry name" value="Ser_HO-MeTrfase"/>
</dbReference>
<dbReference type="InterPro" id="IPR049943">
    <property type="entry name" value="Ser_HO-MeTrfase-like"/>
</dbReference>
<dbReference type="InterPro" id="IPR039429">
    <property type="entry name" value="SHMT-like_dom"/>
</dbReference>
<dbReference type="NCBIfam" id="NF000586">
    <property type="entry name" value="PRK00011.1"/>
    <property type="match status" value="1"/>
</dbReference>
<dbReference type="PANTHER" id="PTHR11680">
    <property type="entry name" value="SERINE HYDROXYMETHYLTRANSFERASE"/>
    <property type="match status" value="1"/>
</dbReference>
<dbReference type="PANTHER" id="PTHR11680:SF35">
    <property type="entry name" value="SERINE HYDROXYMETHYLTRANSFERASE 1"/>
    <property type="match status" value="1"/>
</dbReference>
<dbReference type="Pfam" id="PF00464">
    <property type="entry name" value="SHMT"/>
    <property type="match status" value="1"/>
</dbReference>
<dbReference type="PIRSF" id="PIRSF000412">
    <property type="entry name" value="SHMT"/>
    <property type="match status" value="1"/>
</dbReference>
<dbReference type="SUPFAM" id="SSF53383">
    <property type="entry name" value="PLP-dependent transferases"/>
    <property type="match status" value="1"/>
</dbReference>
<protein>
    <recommendedName>
        <fullName evidence="1">Serine hydroxymethyltransferase</fullName>
        <shortName evidence="1">SHMT</shortName>
        <shortName evidence="1">Serine methylase</shortName>
        <ecNumber evidence="1">2.1.2.-</ecNumber>
    </recommendedName>
</protein>
<accession>A9A3Y9</accession>
<evidence type="ECO:0000255" key="1">
    <source>
        <dbReference type="HAMAP-Rule" id="MF_00051"/>
    </source>
</evidence>
<comment type="function">
    <text evidence="1">Catalyzes the reversible interconversion of serine and glycine with a modified folate serving as the one-carbon carrier. Also exhibits a pteridine-independent aldolase activity toward beta-hydroxyamino acids, producing glycine and aldehydes, via a retro-aldol mechanism.</text>
</comment>
<comment type="cofactor">
    <cofactor evidence="1">
        <name>pyridoxal 5'-phosphate</name>
        <dbReference type="ChEBI" id="CHEBI:597326"/>
    </cofactor>
</comment>
<comment type="pathway">
    <text evidence="1">Amino-acid biosynthesis; glycine biosynthesis; glycine from L-serine: step 1/1.</text>
</comment>
<comment type="subunit">
    <text evidence="1">Homodimer.</text>
</comment>
<comment type="subcellular location">
    <subcellularLocation>
        <location evidence="1">Cytoplasm</location>
    </subcellularLocation>
</comment>
<comment type="similarity">
    <text evidence="1">Belongs to the SHMT family.</text>
</comment>
<sequence length="440" mass="48723">MAKSQNKESYNKIFAKLKEHHKWFENSIPLIASENIPSPAVREAVISDFGNRYAEGWPGERVYAGCIYIDDVEFECMKLAKKLYKAKFADVRPISGVVANLAVYSAYSNPGDVMLAPSIPAGGHISHGKKEHSGTAGLVHGLEIEFYPFDAEEMTIDVDKTKQKVKELKKNNRLPKIAMFGGSLFLFPHPVKELSDFLKSYDMHINYDAAHVAGLIAGGKFQDPLKEGADTMTMSTHKTLFGPQGGLVLGSEKHEEPIKKATFPGLTSSHHINNMAGKAVAFAEALEFGKDYAAQVIKNAKSFAEALSDAGFKVLGESRGFTQSHQIAVNVLDYSDGGKVEADLEKANIIVNRQLIPGDIKAGRNYFHPGGIRLGVSEITRLGMKKNEMQEIASFIKQVVIEKKDPKKLLSKVKSFRKNYQKVKFCFDNKLGAYEYVKLR</sequence>
<feature type="chain" id="PRO_0000369972" description="Serine hydroxymethyltransferase">
    <location>
        <begin position="1"/>
        <end position="440"/>
    </location>
</feature>
<feature type="binding site" evidence="1">
    <location>
        <begin position="123"/>
        <end position="125"/>
    </location>
    <ligand>
        <name>(6S)-5,6,7,8-tetrahydrofolate</name>
        <dbReference type="ChEBI" id="CHEBI:57453"/>
    </ligand>
</feature>
<feature type="site" description="Plays an important role in substrate specificity" evidence="1">
    <location>
        <position position="237"/>
    </location>
</feature>
<feature type="modified residue" description="N6-(pyridoxal phosphate)lysine" evidence="1">
    <location>
        <position position="238"/>
    </location>
</feature>
<proteinExistence type="inferred from homology"/>
<gene>
    <name evidence="1" type="primary">glyA</name>
    <name type="ordered locus">Nmar_1793</name>
</gene>
<reference key="1">
    <citation type="journal article" date="2010" name="Proc. Natl. Acad. Sci. U.S.A.">
        <title>Nitrosopumilus maritimus genome reveals unique mechanisms for nitrification and autotrophy in globally distributed marine crenarchaea.</title>
        <authorList>
            <person name="Walker C.B."/>
            <person name="de la Torre J.R."/>
            <person name="Klotz M.G."/>
            <person name="Urakawa H."/>
            <person name="Pinel N."/>
            <person name="Arp D.J."/>
            <person name="Brochier-Armanet C."/>
            <person name="Chain P.S."/>
            <person name="Chan P.P."/>
            <person name="Gollabgir A."/>
            <person name="Hemp J."/>
            <person name="Hugler M."/>
            <person name="Karr E.A."/>
            <person name="Konneke M."/>
            <person name="Shin M."/>
            <person name="Lawton T.J."/>
            <person name="Lowe T."/>
            <person name="Martens-Habbena W."/>
            <person name="Sayavedra-Soto L.A."/>
            <person name="Lang D."/>
            <person name="Sievert S.M."/>
            <person name="Rosenzweig A.C."/>
            <person name="Manning G."/>
            <person name="Stahl D.A."/>
        </authorList>
    </citation>
    <scope>NUCLEOTIDE SEQUENCE [LARGE SCALE GENOMIC DNA]</scope>
    <source>
        <strain>SCM1</strain>
    </source>
</reference>